<evidence type="ECO:0000250" key="1"/>
<evidence type="ECO:0000250" key="2">
    <source>
        <dbReference type="UniProtKB" id="P23787"/>
    </source>
</evidence>
<evidence type="ECO:0000250" key="3">
    <source>
        <dbReference type="UniProtKB" id="P46462"/>
    </source>
</evidence>
<evidence type="ECO:0000250" key="4">
    <source>
        <dbReference type="UniProtKB" id="P55072"/>
    </source>
</evidence>
<evidence type="ECO:0000250" key="5">
    <source>
        <dbReference type="UniProtKB" id="Q01853"/>
    </source>
</evidence>
<evidence type="ECO:0000256" key="6">
    <source>
        <dbReference type="SAM" id="MobiDB-lite"/>
    </source>
</evidence>
<evidence type="ECO:0000305" key="7"/>
<name>TERA_BOVIN</name>
<sequence>MASGADSKGDDLSTAILKQKNRPNRLIVDEAINEDNSVVSLSQPKMDELQLFRGDTVLLKGKKRREAVCIVLSDDTCSDEKIRMNRVVRNNLRVHLGDVISIQPCPDVKYGKRIHVLPIDDTVEGITGNLFEVYLKPYFLEAYRPIRKGDIFLVRGGMRAVEFKVVETDPSPYCIVAPDTVIHCEGEPIKREDEEESLNEVGYDDIGGCRKQLAQIKEMVELPLRHPALFKAIGVKPPRGILLYGPPGTGKTLIARAVANETGAFFFLINGPEIMSKLAGESESNLRKAFEEAEKNAPAIIFIDELDAIAPKREKTHGEVERRIVSQLLTLMDGLKQRAHVIVMAATNRPNSIDPALRRFGRFDREVDIGIPDATGRLEILQIHTKNMKLADDVDLEQVANETHGHVGADLAALCSEAALQAIRKKMDLIDLEDETIDAEVMNSLAVTMDDFRWALSQSNPSALRETVVEVPQVTWEDIGGLEDVKRELQELVQYPVEHPDKFLKFGMTPSKGVLFYGPPGCGKTLLAKAIANECQANFISIKGPELLTMWFGESEANVREIFDKARQAAPCVLFFDELDSIAKARGGNIGDGGGAADRVINQILTEMDGMSTKKNVFIIGATNRPDIIDPAILRPGRLDQLIYIPLPDEKSRVAILKANLRKSPVAKDVDLEFLAKMTNGFSGADLTEICQRACKLAIRESIESEIRRERERQTNPSAMEVEEDDPVPEIRRDHFEEAMRFARRSVSDNDIRKYEMFAQTLQQSRGFGSFRFPSGNQGGAGPSQGSGGGTGGNVYTEDNDDDLYG</sequence>
<feature type="initiator methionine" description="Removed" evidence="4">
    <location>
        <position position="1"/>
    </location>
</feature>
<feature type="chain" id="PRO_0000280706" description="Transitional endoplasmic reticulum ATPase">
    <location>
        <begin position="2"/>
        <end position="806"/>
    </location>
</feature>
<feature type="region of interest" description="Disordered" evidence="6">
    <location>
        <begin position="708"/>
        <end position="727"/>
    </location>
</feature>
<feature type="region of interest" description="Disordered" evidence="6">
    <location>
        <begin position="768"/>
        <end position="806"/>
    </location>
</feature>
<feature type="region of interest" description="Interaction with UBXN6" evidence="1">
    <location>
        <begin position="797"/>
        <end position="806"/>
    </location>
</feature>
<feature type="short sequence motif" description="PIM motif" evidence="4">
    <location>
        <begin position="802"/>
        <end position="806"/>
    </location>
</feature>
<feature type="compositionally biased region" description="Gly residues" evidence="6">
    <location>
        <begin position="777"/>
        <end position="793"/>
    </location>
</feature>
<feature type="binding site" evidence="4">
    <location>
        <begin position="247"/>
        <end position="253"/>
    </location>
    <ligand>
        <name>ATP</name>
        <dbReference type="ChEBI" id="CHEBI:30616"/>
        <label>1</label>
    </ligand>
</feature>
<feature type="binding site" evidence="4">
    <location>
        <position position="348"/>
    </location>
    <ligand>
        <name>ATP</name>
        <dbReference type="ChEBI" id="CHEBI:30616"/>
        <label>1</label>
    </ligand>
</feature>
<feature type="binding site" evidence="4">
    <location>
        <position position="384"/>
    </location>
    <ligand>
        <name>ATP</name>
        <dbReference type="ChEBI" id="CHEBI:30616"/>
        <label>1</label>
    </ligand>
</feature>
<feature type="binding site" evidence="5">
    <location>
        <begin position="521"/>
        <end position="526"/>
    </location>
    <ligand>
        <name>ATP</name>
        <dbReference type="ChEBI" id="CHEBI:30616"/>
        <label>2</label>
    </ligand>
</feature>
<feature type="modified residue" description="N-acetylalanine" evidence="4">
    <location>
        <position position="2"/>
    </location>
</feature>
<feature type="modified residue" description="Phosphoserine" evidence="4">
    <location>
        <position position="3"/>
    </location>
</feature>
<feature type="modified residue" description="Phosphoserine" evidence="4">
    <location>
        <position position="7"/>
    </location>
</feature>
<feature type="modified residue" description="Phosphoserine" evidence="4">
    <location>
        <position position="13"/>
    </location>
</feature>
<feature type="modified residue" description="Phosphoserine" evidence="4">
    <location>
        <position position="37"/>
    </location>
</feature>
<feature type="modified residue" description="N6,N6,N6-trimethyllysine; by VCPKMT" evidence="4">
    <location>
        <position position="315"/>
    </location>
</feature>
<feature type="modified residue" description="Phosphothreonine" evidence="4">
    <location>
        <position position="436"/>
    </location>
</feature>
<feature type="modified residue" description="Phosphoserine" evidence="4">
    <location>
        <position position="462"/>
    </location>
</feature>
<feature type="modified residue" description="N6-acetyllysine" evidence="5">
    <location>
        <position position="502"/>
    </location>
</feature>
<feature type="modified residue" description="N6-acetyllysine" evidence="5">
    <location>
        <position position="505"/>
    </location>
</feature>
<feature type="modified residue" description="N6-acetyllysine; alternate" evidence="5">
    <location>
        <position position="668"/>
    </location>
</feature>
<feature type="modified residue" description="N6-succinyllysine; alternate" evidence="5">
    <location>
        <position position="668"/>
    </location>
</feature>
<feature type="modified residue" description="Phosphoserine" evidence="4">
    <location>
        <position position="702"/>
    </location>
</feature>
<feature type="modified residue" description="N6-acetyllysine" evidence="5">
    <location>
        <position position="754"/>
    </location>
</feature>
<feature type="modified residue" description="Phosphoserine" evidence="4">
    <location>
        <position position="770"/>
    </location>
</feature>
<feature type="modified residue" description="Phosphoserine" evidence="4">
    <location>
        <position position="775"/>
    </location>
</feature>
<feature type="modified residue" description="Phosphoserine" evidence="4">
    <location>
        <position position="787"/>
    </location>
</feature>
<feature type="modified residue" description="Phosphotyrosine" evidence="5">
    <location>
        <position position="805"/>
    </location>
</feature>
<feature type="cross-link" description="Glycyl lysine isopeptide (Lys-Gly) (interchain with G-Cter in SUMO2)" evidence="4">
    <location>
        <position position="8"/>
    </location>
</feature>
<feature type="cross-link" description="Glycyl lysine isopeptide (Lys-Gly) (interchain with G-Cter in SUMO2)" evidence="4">
    <location>
        <position position="18"/>
    </location>
</feature>
<protein>
    <recommendedName>
        <fullName>Transitional endoplasmic reticulum ATPase</fullName>
        <shortName>TER ATPase</shortName>
        <ecNumber evidence="4">3.6.4.6</ecNumber>
    </recommendedName>
    <alternativeName>
        <fullName>15S Mg(2+)-ATPase p97 subunit</fullName>
    </alternativeName>
    <alternativeName>
        <fullName>Valosin-containing protein</fullName>
        <shortName>VCP</shortName>
    </alternativeName>
</protein>
<comment type="function">
    <text evidence="2 3 4">Necessary for the fragmentation of Golgi stacks during mitosis and for their reassembly after mitosis. Involved in the formation of the transitional endoplasmic reticulum (tER). The transfer of membranes from the endoplasmic reticulum to the Golgi apparatus occurs via 50-70 nm transition vesicles which derive from part-rough, part-smooth transitional elements of the endoplasmic reticulum (tER). Vesicle budding from the tER is an ATP-dependent process. The ternary complex containing UFD1, VCP and NPLOC4 binds ubiquitinated proteins and is necessary for the export of misfolded proteins from the ER to the cytoplasm, where they are degraded by the proteasome. The NPLOC4-UFD1-VCP complex regulates spindle disassembly at the end of mitosis and is necessary for the formation of a closed nuclear envelope. Regulates E3 ubiquitin-protein ligase activity of RNF19A. Component of the VCP/p97-AMFR/gp78 complex that participates in the final step of the sterol-mediated ubiquitination and endoplasmic reticulum-associated degradation (ERAD) of HMGCR. Mediates the endoplasmic reticulum-associated degradation of CHRNA3 in cortical neurons as part of the STUB1-VCP-UBXN2A complex (By similarity). Involved in endoplasmic reticulum stress-induced pre-emptive quality control, a mechanism that selectively attenuates the translocation of newly synthesized proteins into the endoplasmic reticulum and reroutes them to the cytosol for proteasomal degradation. Involved in clearance process by mediating G3BP1 extraction from stress granules. Also involved in DNA damage response: recruited to double-strand breaks (DSBs) sites in a RNF8- and RNF168-dependent manner and promotes the recruitment of TP53BP1 at DNA damage sites. Recruited to stalled replication forks by SPRTN: may act by mediating extraction of DNA polymerase eta (POLH) to prevent excessive translesion DNA synthesis and limit the incidence of mutations induced by DNA damage. Together with SPRTN metalloprotease, involved in the repair of covalent DNA-protein cross-links (DPCs) during DNA synthesis. Involved in interstrand cross-link repair in response to replication stress by mediating unloading of the ubiquitinated CMG helicase complex. Mediates extraction of PARP1 trapped to chromatin: recognizes and binds ubiquitinated PARP1 and promotes its removal. Required for cytoplasmic retrotranslocation of stressed/damaged mitochondrial outer-membrane proteins and their subsequent proteasomal degradation. Essential for the maturation of ubiquitin-containing autophagosomes and the clearance of ubiquitinated protein by autophagy. Acts as a negative regulator of type I interferon production by interacting with RIGI: interaction takes place when RIGI is ubiquitinated via 'Lys-63'-linked ubiquitin on its CARD domains, leading to recruit RNF125 and promote ubiquitination and degradation of RIGI. May play a role in the ubiquitin-dependent sorting of membrane proteins to lysosomes where they undergo degradation. May more particularly play a role in caveolins sorting in cells. By controlling the steady-state expression of the IGF1R receptor, indirectly regulates the insulin-like growth factor receptor signaling pathway.</text>
</comment>
<comment type="catalytic activity">
    <reaction evidence="4">
        <text>ATP + H2O = ADP + phosphate + H(+)</text>
        <dbReference type="Rhea" id="RHEA:13065"/>
        <dbReference type="ChEBI" id="CHEBI:15377"/>
        <dbReference type="ChEBI" id="CHEBI:15378"/>
        <dbReference type="ChEBI" id="CHEBI:30616"/>
        <dbReference type="ChEBI" id="CHEBI:43474"/>
        <dbReference type="ChEBI" id="CHEBI:456216"/>
        <dbReference type="EC" id="3.6.4.6"/>
    </reaction>
</comment>
<comment type="subunit">
    <text evidence="3 4 5">Homohexamer. Forms a ring-shaped particle of 12.5 nm diameter, that displays 6-fold radial symmetry. Part of a ternary complex containing STX5A, NSFL1C and VCP. NSFL1C forms a homotrimer that binds to one end of a VCP homohexamer. The complex binds to membranes enriched in phosphatidylethanolamine-containing lipids and promotes Golgi membrane fusion. Binds to a heterodimer of NPLOC4 and UFD1, binding to this heterodimer inhibits Golgi-membrane fusion. Interaction with VCIP135 leads to dissociation of the complex via ATP hydrolysis by VCP. Part of a ternary complex containing NPLOC4, UFD1 and VCP. Interacts with NSFL1C-like protein p37; the complex has membrane fusion activity and is required for Golgi and endoplasmic reticulum biogenesis. Interacts with SELENOS and SYVN1, as well as with DERL1 (via SHP-box motif), DERL2 and DERL3; which probably transfer misfolded proteins from the ER to VCP. Interacts with SVIP and DERL1 (By similarity). Component of a complex required to couple retrotranslocation, ubiquitination and deglycosylation composed of NGLY1, SAKS1, AMFR, VCP and RAD23B. Part of a complex composed of STUB1/CHIP, VCP/p97, CHRNA3, and UBXN2A that modulates the ubiquitination and endoplasmic reticulum-associated degradation (ERAD) of CHRNA3 (By similarity). Within the complex UBXN2A acts as a scaffold protein required for the interaction of CHRNA3 with VCP/p97, this interaction also inhibits CHRNA3 ubiquitination by STUB1/CHIP and subsequently ERAD (By similarity). Interacts with UBXN2A (via UBX domain); the interaction is required for the interaction of CHRNA3 in the STUB1-VCP-UBXN2A complex (By similarity). Directly interacts with UBXN4 and RNF19A. Interacts with CASR. Interacts with UBE4B and YOD1. Interacts with clathrin. Interacts with RNF103. Interacts with TRIM13 and TRIM21. Component of a VCP/p97-AMFR/gp78 complex that participates in the final step of the endoplasmic reticulum-associated degradation (ERAD) of HMGCR. Interacts directly with AMFR/gp78 (via its VIM). Interacts with RHBDD1 (via C-terminal domain). Interacts with SPRTN; leading to recruitment to stalled replication forks. Interacts with WASHC5. Interacts with UBOX5. Interacts (via N-terminus) with UBXN7, UBXN8, and probably several other UBX domain-containing proteins (via UBX domains); the interactions are mutually exclusive with VIM-dependent interactions such as those with AMFR and SELENOS. Forms a complex with UBQLN1 and UBXN4. Interacts (via the PIM motif) with RNF31 (via the PUB domain). Interacts with RIGI and RNF125; interaction takes place when RIGI is ubiquitinated via 'Lys-63'-linked ubiquitin on its CARD domains, leading to recruit RNF125 and promote ubiquitination and degradation of RIGI. Interacts with BAG6. Interacts with UBXN10. Interacts with UBXN6; the interaction with UBXN6 is direct and competitive with UFD1. Forms a ternary complex with CAV1 and UBXN6. Interacts with PLAA, UBXN6 and YOD1; may form a complex involved in macroautophagy. Interacts with ANKZF1. Interacts with ubiquitin-binding protein FAF1. Interacts with ZFAND2B (via VIM motif); the interaction is direct. Interacts with ZFAND1 (via its ubiquitin-like region); this interaction occurs in an arsenite-dependent manner (By similarity). Interacts with CCDC47 (By similarity). Interacts with LMBR1L and UBAC2 (By similarity). Interacts with ATXN3 (By similarity). Interacts with TEX264; bridging VCP to covalent DNA-protein cross-links (DPCs) (By similarity).</text>
</comment>
<comment type="subcellular location">
    <subcellularLocation>
        <location evidence="4">Cytoplasm</location>
        <location evidence="4">Cytosol</location>
    </subcellularLocation>
    <subcellularLocation>
        <location evidence="4">Endoplasmic reticulum</location>
    </subcellularLocation>
    <subcellularLocation>
        <location evidence="4">Nucleus</location>
    </subcellularLocation>
    <subcellularLocation>
        <location evidence="4">Cytoplasm</location>
        <location evidence="4">Stress granule</location>
    </subcellularLocation>
    <text evidence="4">Recruited to the cytoplasmic surface of the endoplasmic reticulum via interaction with AMFR/gp78. Following DNA double-strand breaks, recruited to the sites of damage. Recruited to stalled replication forks via interaction with SPRTN. Recruited to damaged lysosomes decorated with K48-linked ubiquitin chains. Colocalizes with TIA1, ZFAND1 and G3BP1 in cytoplasmic stress granules (SGs) in response to arsenite-induced stress treatment (By similarity).</text>
</comment>
<comment type="domain">
    <text evidence="4">The PIM (PUB-interaction motif) motif mediates interaction with the PUB domain of RNF31.</text>
</comment>
<comment type="PTM">
    <text evidence="4">ISGylated.</text>
</comment>
<comment type="PTM">
    <text evidence="4">Methylation at Lys-315 catalyzed by VCPKMT is increased in the presence of ASPSCR1. Lys-315 methylation may decrease ATPase activity.</text>
</comment>
<comment type="PTM">
    <text evidence="3">Phosphorylated by tyrosine kinases in response to T-cell antigen receptor activation. Phosphorylated in mitotic cells.</text>
</comment>
<comment type="similarity">
    <text evidence="7">Belongs to the AAA ATPase family.</text>
</comment>
<gene>
    <name type="primary">VCP</name>
</gene>
<keyword id="KW-0007">Acetylation</keyword>
<keyword id="KW-0067">ATP-binding</keyword>
<keyword id="KW-0072">Autophagy</keyword>
<keyword id="KW-0963">Cytoplasm</keyword>
<keyword id="KW-0227">DNA damage</keyword>
<keyword id="KW-0234">DNA repair</keyword>
<keyword id="KW-0256">Endoplasmic reticulum</keyword>
<keyword id="KW-0378">Hydrolase</keyword>
<keyword id="KW-1017">Isopeptide bond</keyword>
<keyword id="KW-0446">Lipid-binding</keyword>
<keyword id="KW-0488">Methylation</keyword>
<keyword id="KW-0547">Nucleotide-binding</keyword>
<keyword id="KW-0539">Nucleus</keyword>
<keyword id="KW-0597">Phosphoprotein</keyword>
<keyword id="KW-1185">Reference proteome</keyword>
<keyword id="KW-0813">Transport</keyword>
<keyword id="KW-0832">Ubl conjugation</keyword>
<keyword id="KW-0833">Ubl conjugation pathway</keyword>
<proteinExistence type="evidence at transcript level"/>
<reference key="1">
    <citation type="submission" date="2005-08" db="EMBL/GenBank/DDBJ databases">
        <authorList>
            <consortium name="NIH - Mammalian Gene Collection (MGC) project"/>
        </authorList>
    </citation>
    <scope>NUCLEOTIDE SEQUENCE [LARGE SCALE MRNA]</scope>
    <source>
        <strain>Hereford</strain>
        <tissue>Thymus</tissue>
    </source>
</reference>
<organism>
    <name type="scientific">Bos taurus</name>
    <name type="common">Bovine</name>
    <dbReference type="NCBI Taxonomy" id="9913"/>
    <lineage>
        <taxon>Eukaryota</taxon>
        <taxon>Metazoa</taxon>
        <taxon>Chordata</taxon>
        <taxon>Craniata</taxon>
        <taxon>Vertebrata</taxon>
        <taxon>Euteleostomi</taxon>
        <taxon>Mammalia</taxon>
        <taxon>Eutheria</taxon>
        <taxon>Laurasiatheria</taxon>
        <taxon>Artiodactyla</taxon>
        <taxon>Ruminantia</taxon>
        <taxon>Pecora</taxon>
        <taxon>Bovidae</taxon>
        <taxon>Bovinae</taxon>
        <taxon>Bos</taxon>
    </lineage>
</organism>
<accession>Q3ZBT1</accession>
<dbReference type="EC" id="3.6.4.6" evidence="4"/>
<dbReference type="EMBL" id="BC103125">
    <property type="protein sequence ID" value="AAI03126.1"/>
    <property type="molecule type" value="mRNA"/>
</dbReference>
<dbReference type="RefSeq" id="NP_001029466.1">
    <property type="nucleotide sequence ID" value="NM_001034294.2"/>
</dbReference>
<dbReference type="SMR" id="Q3ZBT1"/>
<dbReference type="FunCoup" id="Q3ZBT1">
    <property type="interactions" value="2325"/>
</dbReference>
<dbReference type="IntAct" id="Q3ZBT1">
    <property type="interactions" value="1"/>
</dbReference>
<dbReference type="STRING" id="9913.ENSBTAP00000019970"/>
<dbReference type="PaxDb" id="9913-ENSBTAP00000019970"/>
<dbReference type="PeptideAtlas" id="Q3ZBT1"/>
<dbReference type="GeneID" id="507345"/>
<dbReference type="KEGG" id="bta:507345"/>
<dbReference type="CTD" id="7415"/>
<dbReference type="eggNOG" id="KOG0730">
    <property type="taxonomic scope" value="Eukaryota"/>
</dbReference>
<dbReference type="InParanoid" id="Q3ZBT1"/>
<dbReference type="OrthoDB" id="27435at2759"/>
<dbReference type="Proteomes" id="UP000009136">
    <property type="component" value="Unplaced"/>
</dbReference>
<dbReference type="GO" id="GO:0005737">
    <property type="term" value="C:cytoplasm"/>
    <property type="evidence" value="ECO:0000250"/>
    <property type="project" value="UniProtKB"/>
</dbReference>
<dbReference type="GO" id="GO:0010494">
    <property type="term" value="C:cytoplasmic stress granule"/>
    <property type="evidence" value="ECO:0000250"/>
    <property type="project" value="UniProtKB"/>
</dbReference>
<dbReference type="GO" id="GO:0005829">
    <property type="term" value="C:cytosol"/>
    <property type="evidence" value="ECO:0000318"/>
    <property type="project" value="GO_Central"/>
</dbReference>
<dbReference type="GO" id="GO:0005634">
    <property type="term" value="C:nucleus"/>
    <property type="evidence" value="ECO:0000318"/>
    <property type="project" value="GO_Central"/>
</dbReference>
<dbReference type="GO" id="GO:0035861">
    <property type="term" value="C:site of double-strand break"/>
    <property type="evidence" value="ECO:0000250"/>
    <property type="project" value="UniProtKB"/>
</dbReference>
<dbReference type="GO" id="GO:0034098">
    <property type="term" value="C:VCP-NPL4-UFD1 AAA ATPase complex"/>
    <property type="evidence" value="ECO:0000318"/>
    <property type="project" value="GO_Central"/>
</dbReference>
<dbReference type="GO" id="GO:0005524">
    <property type="term" value="F:ATP binding"/>
    <property type="evidence" value="ECO:0007669"/>
    <property type="project" value="UniProtKB-KW"/>
</dbReference>
<dbReference type="GO" id="GO:0016887">
    <property type="term" value="F:ATP hydrolysis activity"/>
    <property type="evidence" value="ECO:0000318"/>
    <property type="project" value="GO_Central"/>
</dbReference>
<dbReference type="GO" id="GO:0008289">
    <property type="term" value="F:lipid binding"/>
    <property type="evidence" value="ECO:0007669"/>
    <property type="project" value="UniProtKB-KW"/>
</dbReference>
<dbReference type="GO" id="GO:0031593">
    <property type="term" value="F:polyubiquitin modification-dependent protein binding"/>
    <property type="evidence" value="ECO:0000318"/>
    <property type="project" value="GO_Central"/>
</dbReference>
<dbReference type="GO" id="GO:0097352">
    <property type="term" value="P:autophagosome maturation"/>
    <property type="evidence" value="ECO:0000250"/>
    <property type="project" value="UniProtKB"/>
</dbReference>
<dbReference type="GO" id="GO:0006914">
    <property type="term" value="P:autophagy"/>
    <property type="evidence" value="ECO:0000250"/>
    <property type="project" value="UniProtKB"/>
</dbReference>
<dbReference type="GO" id="GO:1903843">
    <property type="term" value="P:cellular response to arsenite ion"/>
    <property type="evidence" value="ECO:0000250"/>
    <property type="project" value="UniProtKB"/>
</dbReference>
<dbReference type="GO" id="GO:0034605">
    <property type="term" value="P:cellular response to heat"/>
    <property type="evidence" value="ECO:0000250"/>
    <property type="project" value="UniProtKB"/>
</dbReference>
<dbReference type="GO" id="GO:0006974">
    <property type="term" value="P:DNA damage response"/>
    <property type="evidence" value="ECO:0000250"/>
    <property type="project" value="UniProtKB"/>
</dbReference>
<dbReference type="GO" id="GO:0006281">
    <property type="term" value="P:DNA repair"/>
    <property type="evidence" value="ECO:0000250"/>
    <property type="project" value="UniProtKB"/>
</dbReference>
<dbReference type="GO" id="GO:0006302">
    <property type="term" value="P:double-strand break repair"/>
    <property type="evidence" value="ECO:0000250"/>
    <property type="project" value="UniProtKB"/>
</dbReference>
<dbReference type="GO" id="GO:0061857">
    <property type="term" value="P:endoplasmic reticulum stress-induced pre-emptive quality control"/>
    <property type="evidence" value="ECO:0000250"/>
    <property type="project" value="UniProtKB"/>
</dbReference>
<dbReference type="GO" id="GO:0032510">
    <property type="term" value="P:endosome to lysosome transport via multivesicular body sorting pathway"/>
    <property type="evidence" value="ECO:0000250"/>
    <property type="project" value="UniProtKB"/>
</dbReference>
<dbReference type="GO" id="GO:0036503">
    <property type="term" value="P:ERAD pathway"/>
    <property type="evidence" value="ECO:0000250"/>
    <property type="project" value="UniProtKB"/>
</dbReference>
<dbReference type="GO" id="GO:0036297">
    <property type="term" value="P:interstrand cross-link repair"/>
    <property type="evidence" value="ECO:0000250"/>
    <property type="project" value="UniProtKB"/>
</dbReference>
<dbReference type="GO" id="GO:0016236">
    <property type="term" value="P:macroautophagy"/>
    <property type="evidence" value="ECO:0000250"/>
    <property type="project" value="UniProtKB"/>
</dbReference>
<dbReference type="GO" id="GO:0051228">
    <property type="term" value="P:mitotic spindle disassembly"/>
    <property type="evidence" value="ECO:0000318"/>
    <property type="project" value="GO_Central"/>
</dbReference>
<dbReference type="GO" id="GO:0010498">
    <property type="term" value="P:proteasomal protein catabolic process"/>
    <property type="evidence" value="ECO:0000250"/>
    <property type="project" value="UniProtKB"/>
</dbReference>
<dbReference type="GO" id="GO:0043161">
    <property type="term" value="P:proteasome-mediated ubiquitin-dependent protein catabolic process"/>
    <property type="evidence" value="ECO:0000250"/>
    <property type="project" value="UniProtKB"/>
</dbReference>
<dbReference type="GO" id="GO:0016567">
    <property type="term" value="P:protein ubiquitination"/>
    <property type="evidence" value="ECO:0000250"/>
    <property type="project" value="UniProtKB"/>
</dbReference>
<dbReference type="GO" id="GO:0106300">
    <property type="term" value="P:protein-DNA covalent cross-linking repair"/>
    <property type="evidence" value="ECO:0000250"/>
    <property type="project" value="UniProtKB"/>
</dbReference>
<dbReference type="GO" id="GO:1905634">
    <property type="term" value="P:regulation of protein localization to chromatin"/>
    <property type="evidence" value="ECO:0000250"/>
    <property type="project" value="UniProtKB"/>
</dbReference>
<dbReference type="GO" id="GO:0030970">
    <property type="term" value="P:retrograde protein transport, ER to cytosol"/>
    <property type="evidence" value="ECO:0000318"/>
    <property type="project" value="GO_Central"/>
</dbReference>
<dbReference type="GO" id="GO:0035617">
    <property type="term" value="P:stress granule disassembly"/>
    <property type="evidence" value="ECO:0000250"/>
    <property type="project" value="UniProtKB"/>
</dbReference>
<dbReference type="GO" id="GO:0019985">
    <property type="term" value="P:translesion synthesis"/>
    <property type="evidence" value="ECO:0000250"/>
    <property type="project" value="UniProtKB"/>
</dbReference>
<dbReference type="CDD" id="cd19519">
    <property type="entry name" value="RecA-like_CDC48_r1-like"/>
    <property type="match status" value="1"/>
</dbReference>
<dbReference type="CDD" id="cd19528">
    <property type="entry name" value="RecA-like_CDC48_r2-like"/>
    <property type="match status" value="1"/>
</dbReference>
<dbReference type="FunFam" id="1.10.8.60:FF:000004">
    <property type="entry name" value="Cell division control 48"/>
    <property type="match status" value="1"/>
</dbReference>
<dbReference type="FunFam" id="3.10.330.10:FF:000001">
    <property type="entry name" value="Cell division control 48"/>
    <property type="match status" value="1"/>
</dbReference>
<dbReference type="FunFam" id="2.40.40.20:FF:000003">
    <property type="entry name" value="Transitional endoplasmic reticulum ATPase"/>
    <property type="match status" value="1"/>
</dbReference>
<dbReference type="FunFam" id="3.40.50.300:FF:000012">
    <property type="entry name" value="Transitional endoplasmic reticulum ATPase"/>
    <property type="match status" value="1"/>
</dbReference>
<dbReference type="FunFam" id="3.40.50.300:FF:000048">
    <property type="entry name" value="Transitional endoplasmic reticulum ATPase"/>
    <property type="match status" value="1"/>
</dbReference>
<dbReference type="Gene3D" id="1.10.8.60">
    <property type="match status" value="1"/>
</dbReference>
<dbReference type="Gene3D" id="2.40.40.20">
    <property type="match status" value="1"/>
</dbReference>
<dbReference type="Gene3D" id="3.10.330.10">
    <property type="match status" value="1"/>
</dbReference>
<dbReference type="Gene3D" id="6.10.20.150">
    <property type="match status" value="1"/>
</dbReference>
<dbReference type="Gene3D" id="3.40.50.300">
    <property type="entry name" value="P-loop containing nucleotide triphosphate hydrolases"/>
    <property type="match status" value="2"/>
</dbReference>
<dbReference type="InterPro" id="IPR003593">
    <property type="entry name" value="AAA+_ATPase"/>
</dbReference>
<dbReference type="InterPro" id="IPR005938">
    <property type="entry name" value="AAA_ATPase_CDC48"/>
</dbReference>
<dbReference type="InterPro" id="IPR050168">
    <property type="entry name" value="AAA_ATPase_domain"/>
</dbReference>
<dbReference type="InterPro" id="IPR041569">
    <property type="entry name" value="AAA_lid_3"/>
</dbReference>
<dbReference type="InterPro" id="IPR009010">
    <property type="entry name" value="Asp_de-COase-like_dom_sf"/>
</dbReference>
<dbReference type="InterPro" id="IPR003959">
    <property type="entry name" value="ATPase_AAA_core"/>
</dbReference>
<dbReference type="InterPro" id="IPR003960">
    <property type="entry name" value="ATPase_AAA_CS"/>
</dbReference>
<dbReference type="InterPro" id="IPR004201">
    <property type="entry name" value="Cdc48_dom2"/>
</dbReference>
<dbReference type="InterPro" id="IPR029067">
    <property type="entry name" value="CDC48_domain_2-like_sf"/>
</dbReference>
<dbReference type="InterPro" id="IPR003338">
    <property type="entry name" value="CDC4_N-term_subdom"/>
</dbReference>
<dbReference type="InterPro" id="IPR027417">
    <property type="entry name" value="P-loop_NTPase"/>
</dbReference>
<dbReference type="NCBIfam" id="TIGR01243">
    <property type="entry name" value="CDC48"/>
    <property type="match status" value="1"/>
</dbReference>
<dbReference type="PANTHER" id="PTHR23077">
    <property type="entry name" value="AAA-FAMILY ATPASE"/>
    <property type="match status" value="1"/>
</dbReference>
<dbReference type="PANTHER" id="PTHR23077:SF69">
    <property type="entry name" value="TRANSITIONAL ENDOPLASMIC RETICULUM ATPASE"/>
    <property type="match status" value="1"/>
</dbReference>
<dbReference type="Pfam" id="PF00004">
    <property type="entry name" value="AAA"/>
    <property type="match status" value="2"/>
</dbReference>
<dbReference type="Pfam" id="PF17862">
    <property type="entry name" value="AAA_lid_3"/>
    <property type="match status" value="2"/>
</dbReference>
<dbReference type="Pfam" id="PF02933">
    <property type="entry name" value="CDC48_2"/>
    <property type="match status" value="1"/>
</dbReference>
<dbReference type="Pfam" id="PF02359">
    <property type="entry name" value="CDC48_N"/>
    <property type="match status" value="1"/>
</dbReference>
<dbReference type="SMART" id="SM00382">
    <property type="entry name" value="AAA"/>
    <property type="match status" value="2"/>
</dbReference>
<dbReference type="SMART" id="SM01072">
    <property type="entry name" value="CDC48_2"/>
    <property type="match status" value="1"/>
</dbReference>
<dbReference type="SMART" id="SM01073">
    <property type="entry name" value="CDC48_N"/>
    <property type="match status" value="1"/>
</dbReference>
<dbReference type="SUPFAM" id="SSF50692">
    <property type="entry name" value="ADC-like"/>
    <property type="match status" value="1"/>
</dbReference>
<dbReference type="SUPFAM" id="SSF54585">
    <property type="entry name" value="Cdc48 domain 2-like"/>
    <property type="match status" value="1"/>
</dbReference>
<dbReference type="SUPFAM" id="SSF52540">
    <property type="entry name" value="P-loop containing nucleoside triphosphate hydrolases"/>
    <property type="match status" value="2"/>
</dbReference>
<dbReference type="PROSITE" id="PS00674">
    <property type="entry name" value="AAA"/>
    <property type="match status" value="2"/>
</dbReference>